<dbReference type="EC" id="7.1.1.-" evidence="1"/>
<dbReference type="EMBL" id="EU262889">
    <property type="protein sequence ID" value="ABW98860.1"/>
    <property type="molecule type" value="Genomic_DNA"/>
</dbReference>
<dbReference type="RefSeq" id="YP_001687355.1">
    <property type="nucleotide sequence ID" value="NC_010361.1"/>
</dbReference>
<dbReference type="SMR" id="B0Z4U8"/>
<dbReference type="GeneID" id="5952014"/>
<dbReference type="GO" id="GO:0009535">
    <property type="term" value="C:chloroplast thylakoid membrane"/>
    <property type="evidence" value="ECO:0007669"/>
    <property type="project" value="UniProtKB-SubCell"/>
</dbReference>
<dbReference type="GO" id="GO:0008137">
    <property type="term" value="F:NADH dehydrogenase (ubiquinone) activity"/>
    <property type="evidence" value="ECO:0007669"/>
    <property type="project" value="InterPro"/>
</dbReference>
<dbReference type="GO" id="GO:0048038">
    <property type="term" value="F:quinone binding"/>
    <property type="evidence" value="ECO:0007669"/>
    <property type="project" value="UniProtKB-KW"/>
</dbReference>
<dbReference type="GO" id="GO:0019684">
    <property type="term" value="P:photosynthesis, light reaction"/>
    <property type="evidence" value="ECO:0007669"/>
    <property type="project" value="UniProtKB-UniRule"/>
</dbReference>
<dbReference type="FunFam" id="3.30.460.80:FF:000004">
    <property type="entry name" value="NAD(P)H-quinone oxidoreductase subunit J, chloroplastic"/>
    <property type="match status" value="1"/>
</dbReference>
<dbReference type="Gene3D" id="3.30.460.80">
    <property type="entry name" value="NADH:ubiquinone oxidoreductase, 30kDa subunit"/>
    <property type="match status" value="1"/>
</dbReference>
<dbReference type="HAMAP" id="MF_01357">
    <property type="entry name" value="NDH1_NuoC"/>
    <property type="match status" value="1"/>
</dbReference>
<dbReference type="InterPro" id="IPR010218">
    <property type="entry name" value="NADH_DH_suC"/>
</dbReference>
<dbReference type="InterPro" id="IPR037232">
    <property type="entry name" value="NADH_quin_OxRdtase_su_C/D-like"/>
</dbReference>
<dbReference type="InterPro" id="IPR001268">
    <property type="entry name" value="NADH_UbQ_OxRdtase_30kDa_su"/>
</dbReference>
<dbReference type="InterPro" id="IPR020396">
    <property type="entry name" value="NADH_UbQ_OxRdtase_CS"/>
</dbReference>
<dbReference type="NCBIfam" id="NF009141">
    <property type="entry name" value="PRK12494.1"/>
    <property type="match status" value="1"/>
</dbReference>
<dbReference type="PANTHER" id="PTHR10884:SF14">
    <property type="entry name" value="NADH DEHYDROGENASE [UBIQUINONE] IRON-SULFUR PROTEIN 3, MITOCHONDRIAL"/>
    <property type="match status" value="1"/>
</dbReference>
<dbReference type="PANTHER" id="PTHR10884">
    <property type="entry name" value="NADH DEHYDROGENASE UBIQUINONE IRON-SULFUR PROTEIN 3"/>
    <property type="match status" value="1"/>
</dbReference>
<dbReference type="Pfam" id="PF00329">
    <property type="entry name" value="Complex1_30kDa"/>
    <property type="match status" value="1"/>
</dbReference>
<dbReference type="SUPFAM" id="SSF143243">
    <property type="entry name" value="Nqo5-like"/>
    <property type="match status" value="1"/>
</dbReference>
<dbReference type="PROSITE" id="PS00542">
    <property type="entry name" value="COMPLEX1_30K"/>
    <property type="match status" value="1"/>
</dbReference>
<feature type="chain" id="PRO_0000358290" description="NAD(P)H-quinone oxidoreductase subunit J, chloroplastic">
    <location>
        <begin position="1"/>
        <end position="158"/>
    </location>
</feature>
<accession>B0Z4U8</accession>
<organism>
    <name type="scientific">Oenothera biennis</name>
    <name type="common">German evening primrose</name>
    <name type="synonym">Onagra biennis</name>
    <dbReference type="NCBI Taxonomy" id="3942"/>
    <lineage>
        <taxon>Eukaryota</taxon>
        <taxon>Viridiplantae</taxon>
        <taxon>Streptophyta</taxon>
        <taxon>Embryophyta</taxon>
        <taxon>Tracheophyta</taxon>
        <taxon>Spermatophyta</taxon>
        <taxon>Magnoliopsida</taxon>
        <taxon>eudicotyledons</taxon>
        <taxon>Gunneridae</taxon>
        <taxon>Pentapetalae</taxon>
        <taxon>rosids</taxon>
        <taxon>malvids</taxon>
        <taxon>Myrtales</taxon>
        <taxon>Onagraceae</taxon>
        <taxon>Onagroideae</taxon>
        <taxon>Onagreae</taxon>
        <taxon>Oenothera</taxon>
    </lineage>
</organism>
<proteinExistence type="inferred from homology"/>
<protein>
    <recommendedName>
        <fullName evidence="1">NAD(P)H-quinone oxidoreductase subunit J, chloroplastic</fullName>
        <ecNumber evidence="1">7.1.1.-</ecNumber>
    </recommendedName>
    <alternativeName>
        <fullName>NAD(P)H dehydrogenase subunit J</fullName>
    </alternativeName>
    <alternativeName>
        <fullName evidence="1">NADH-plastoquinone oxidoreductase subunit J</fullName>
    </alternativeName>
</protein>
<geneLocation type="chloroplast"/>
<comment type="function">
    <text evidence="1">NDH shuttles electrons from NAD(P)H:plastoquinone, via FMN and iron-sulfur (Fe-S) centers, to quinones in the photosynthetic chain and possibly in a chloroplast respiratory chain. The immediate electron acceptor for the enzyme in this species is believed to be plastoquinone. Couples the redox reaction to proton translocation, and thus conserves the redox energy in a proton gradient.</text>
</comment>
<comment type="catalytic activity">
    <reaction evidence="1">
        <text>a plastoquinone + NADH + (n+1) H(+)(in) = a plastoquinol + NAD(+) + n H(+)(out)</text>
        <dbReference type="Rhea" id="RHEA:42608"/>
        <dbReference type="Rhea" id="RHEA-COMP:9561"/>
        <dbReference type="Rhea" id="RHEA-COMP:9562"/>
        <dbReference type="ChEBI" id="CHEBI:15378"/>
        <dbReference type="ChEBI" id="CHEBI:17757"/>
        <dbReference type="ChEBI" id="CHEBI:57540"/>
        <dbReference type="ChEBI" id="CHEBI:57945"/>
        <dbReference type="ChEBI" id="CHEBI:62192"/>
    </reaction>
</comment>
<comment type="catalytic activity">
    <reaction evidence="1">
        <text>a plastoquinone + NADPH + (n+1) H(+)(in) = a plastoquinol + NADP(+) + n H(+)(out)</text>
        <dbReference type="Rhea" id="RHEA:42612"/>
        <dbReference type="Rhea" id="RHEA-COMP:9561"/>
        <dbReference type="Rhea" id="RHEA-COMP:9562"/>
        <dbReference type="ChEBI" id="CHEBI:15378"/>
        <dbReference type="ChEBI" id="CHEBI:17757"/>
        <dbReference type="ChEBI" id="CHEBI:57783"/>
        <dbReference type="ChEBI" id="CHEBI:58349"/>
        <dbReference type="ChEBI" id="CHEBI:62192"/>
    </reaction>
</comment>
<comment type="subunit">
    <text evidence="1">NDH is composed of at least 16 different subunits, 5 of which are encoded in the nucleus.</text>
</comment>
<comment type="subcellular location">
    <subcellularLocation>
        <location evidence="1">Plastid</location>
        <location evidence="1">Chloroplast thylakoid membrane</location>
        <topology evidence="1">Peripheral membrane protein</topology>
        <orientation evidence="1">Stromal side</orientation>
    </subcellularLocation>
</comment>
<comment type="similarity">
    <text evidence="1">Belongs to the complex I 30 kDa subunit family.</text>
</comment>
<evidence type="ECO:0000255" key="1">
    <source>
        <dbReference type="HAMAP-Rule" id="MF_01357"/>
    </source>
</evidence>
<keyword id="KW-0150">Chloroplast</keyword>
<keyword id="KW-0472">Membrane</keyword>
<keyword id="KW-0520">NAD</keyword>
<keyword id="KW-0521">NADP</keyword>
<keyword id="KW-0934">Plastid</keyword>
<keyword id="KW-0618">Plastoquinone</keyword>
<keyword id="KW-0874">Quinone</keyword>
<keyword id="KW-0793">Thylakoid</keyword>
<keyword id="KW-1278">Translocase</keyword>
<keyword id="KW-0813">Transport</keyword>
<gene>
    <name evidence="1" type="primary">ndhJ</name>
</gene>
<reference key="1">
    <citation type="journal article" date="2008" name="Nucleic Acids Res.">
        <title>The complete nucleotide sequences of the five genetically distinct plastid genomes of Oenothera, subsection Oenothera: I. Sequence evaluation and plastome evolution.</title>
        <authorList>
            <person name="Greiner S."/>
            <person name="Wang X."/>
            <person name="Rauwolf U."/>
            <person name="Silber M.V."/>
            <person name="Mayer K."/>
            <person name="Meurer J."/>
            <person name="Haberer G."/>
            <person name="Herrmann R.G."/>
        </authorList>
    </citation>
    <scope>NUCLEOTIDE SEQUENCE [LARGE SCALE GENOMIC DNA]</scope>
    <source>
        <strain>cv. Suaveolens Grado</strain>
    </source>
</reference>
<name>NDHJ_OENBI</name>
<sequence length="158" mass="18592">MQGRLSAWLVKHGLVHRSLGFDYQGIETLQIKPEEWHSIAVILYVYGYNYLRSQCAYDVAPGGLLASVYHLTRIEYGVDQAEEVCIKVFAPRNNPRIPSVFWVWKSADFQERESYDMLGIRYDNHPRLKRILMPESWIGWPLRKDYIAPNFYEIQDAH</sequence>